<keyword id="KW-0687">Ribonucleoprotein</keyword>
<keyword id="KW-0689">Ribosomal protein</keyword>
<keyword id="KW-0694">RNA-binding</keyword>
<keyword id="KW-0699">rRNA-binding</keyword>
<proteinExistence type="inferred from homology"/>
<evidence type="ECO:0000255" key="1">
    <source>
        <dbReference type="HAMAP-Rule" id="MF_01306"/>
    </source>
</evidence>
<evidence type="ECO:0000256" key="2">
    <source>
        <dbReference type="SAM" id="MobiDB-lite"/>
    </source>
</evidence>
<evidence type="ECO:0000305" key="3"/>
<gene>
    <name evidence="1" type="primary">rps4</name>
    <name type="ordered locus">MM_2156</name>
</gene>
<protein>
    <recommendedName>
        <fullName evidence="1">Small ribosomal subunit protein uS4</fullName>
    </recommendedName>
    <alternativeName>
        <fullName evidence="3">30S ribosomal protein S4</fullName>
    </alternativeName>
</protein>
<organism>
    <name type="scientific">Methanosarcina mazei (strain ATCC BAA-159 / DSM 3647 / Goe1 / Go1 / JCM 11833 / OCM 88)</name>
    <name type="common">Methanosarcina frisia</name>
    <dbReference type="NCBI Taxonomy" id="192952"/>
    <lineage>
        <taxon>Archaea</taxon>
        <taxon>Methanobacteriati</taxon>
        <taxon>Methanobacteriota</taxon>
        <taxon>Stenosarchaea group</taxon>
        <taxon>Methanomicrobia</taxon>
        <taxon>Methanosarcinales</taxon>
        <taxon>Methanosarcinaceae</taxon>
        <taxon>Methanosarcina</taxon>
    </lineage>
</organism>
<sequence>MAYPGKKSKSYETPRHPWQEARMAAEVQLVKAYGLRNKKEVWKAASMLRMYRSEARKLLAQVASGGQEGELEGHYATQSEEILSKLIRYGIIKADANVDDILSLKTENILERRLQTQVLRLGLARTVIQARQFITHGHIAINGRKATIPGMLVSKEDEMHIGYYGSSPLMSESHSERPVQVASFLADSATTLKAAAEAKQARERPPERGGGRKKRGGRR</sequence>
<name>RS4_METMA</name>
<comment type="function">
    <text evidence="1">One of the primary rRNA binding proteins, it binds directly to 16S rRNA where it nucleates assembly of the body of the 30S subunit.</text>
</comment>
<comment type="function">
    <text evidence="1">With S5 and S12 plays an important role in translational accuracy.</text>
</comment>
<comment type="subunit">
    <text evidence="1">Part of the 30S ribosomal subunit. Contacts protein S5. The interaction surface between S4 and S5 is involved in control of translational fidelity.</text>
</comment>
<comment type="similarity">
    <text evidence="1">Belongs to the universal ribosomal protein uS4 family.</text>
</comment>
<feature type="chain" id="PRO_0000132510" description="Small ribosomal subunit protein uS4">
    <location>
        <begin position="1"/>
        <end position="219"/>
    </location>
</feature>
<feature type="domain" description="S4 RNA-binding" evidence="1">
    <location>
        <begin position="112"/>
        <end position="174"/>
    </location>
</feature>
<feature type="region of interest" description="Disordered" evidence="2">
    <location>
        <begin position="193"/>
        <end position="219"/>
    </location>
</feature>
<feature type="compositionally biased region" description="Basic and acidic residues" evidence="2">
    <location>
        <begin position="199"/>
        <end position="210"/>
    </location>
</feature>
<reference key="1">
    <citation type="journal article" date="2002" name="J. Mol. Microbiol. Biotechnol.">
        <title>The genome of Methanosarcina mazei: evidence for lateral gene transfer between Bacteria and Archaea.</title>
        <authorList>
            <person name="Deppenmeier U."/>
            <person name="Johann A."/>
            <person name="Hartsch T."/>
            <person name="Merkl R."/>
            <person name="Schmitz R.A."/>
            <person name="Martinez-Arias R."/>
            <person name="Henne A."/>
            <person name="Wiezer A."/>
            <person name="Baeumer S."/>
            <person name="Jacobi C."/>
            <person name="Brueggemann H."/>
            <person name="Lienard T."/>
            <person name="Christmann A."/>
            <person name="Boemecke M."/>
            <person name="Steckel S."/>
            <person name="Bhattacharyya A."/>
            <person name="Lykidis A."/>
            <person name="Overbeek R."/>
            <person name="Klenk H.-P."/>
            <person name="Gunsalus R.P."/>
            <person name="Fritz H.-J."/>
            <person name="Gottschalk G."/>
        </authorList>
    </citation>
    <scope>NUCLEOTIDE SEQUENCE [LARGE SCALE GENOMIC DNA]</scope>
    <source>
        <strain>ATCC BAA-159 / DSM 3647 / Goe1 / Go1 / JCM 11833 / OCM 88</strain>
    </source>
</reference>
<accession>Q8PV18</accession>
<dbReference type="EMBL" id="AE008384">
    <property type="protein sequence ID" value="AAM31852.1"/>
    <property type="molecule type" value="Genomic_DNA"/>
</dbReference>
<dbReference type="RefSeq" id="WP_011034087.1">
    <property type="nucleotide sequence ID" value="NC_003901.1"/>
</dbReference>
<dbReference type="SMR" id="Q8PV18"/>
<dbReference type="KEGG" id="mma:MM_2156"/>
<dbReference type="PATRIC" id="fig|192952.21.peg.2472"/>
<dbReference type="eggNOG" id="arCOG04239">
    <property type="taxonomic scope" value="Archaea"/>
</dbReference>
<dbReference type="HOGENOM" id="CLU_089738_1_1_2"/>
<dbReference type="Proteomes" id="UP000000595">
    <property type="component" value="Chromosome"/>
</dbReference>
<dbReference type="GO" id="GO:0015935">
    <property type="term" value="C:small ribosomal subunit"/>
    <property type="evidence" value="ECO:0007669"/>
    <property type="project" value="InterPro"/>
</dbReference>
<dbReference type="GO" id="GO:0019843">
    <property type="term" value="F:rRNA binding"/>
    <property type="evidence" value="ECO:0007669"/>
    <property type="project" value="UniProtKB-UniRule"/>
</dbReference>
<dbReference type="GO" id="GO:0003735">
    <property type="term" value="F:structural constituent of ribosome"/>
    <property type="evidence" value="ECO:0007669"/>
    <property type="project" value="InterPro"/>
</dbReference>
<dbReference type="GO" id="GO:0042274">
    <property type="term" value="P:ribosomal small subunit biogenesis"/>
    <property type="evidence" value="ECO:0007669"/>
    <property type="project" value="TreeGrafter"/>
</dbReference>
<dbReference type="GO" id="GO:0006412">
    <property type="term" value="P:translation"/>
    <property type="evidence" value="ECO:0007669"/>
    <property type="project" value="UniProtKB-UniRule"/>
</dbReference>
<dbReference type="CDD" id="cd00165">
    <property type="entry name" value="S4"/>
    <property type="match status" value="1"/>
</dbReference>
<dbReference type="FunFam" id="3.10.290.10:FF:000026">
    <property type="entry name" value="30S ribosomal protein S4"/>
    <property type="match status" value="1"/>
</dbReference>
<dbReference type="Gene3D" id="3.10.290.10">
    <property type="entry name" value="RNA-binding S4 domain"/>
    <property type="match status" value="1"/>
</dbReference>
<dbReference type="HAMAP" id="MF_01306_A">
    <property type="entry name" value="Ribosomal_uS4_A"/>
    <property type="match status" value="1"/>
</dbReference>
<dbReference type="InterPro" id="IPR022801">
    <property type="entry name" value="Ribosomal_uS4"/>
</dbReference>
<dbReference type="InterPro" id="IPR022802">
    <property type="entry name" value="Ribosomal_uS4_arc"/>
</dbReference>
<dbReference type="InterPro" id="IPR018079">
    <property type="entry name" value="Ribosomal_uS4_CS"/>
</dbReference>
<dbReference type="InterPro" id="IPR005710">
    <property type="entry name" value="Ribosomal_uS4_euk/arc"/>
</dbReference>
<dbReference type="InterPro" id="IPR001912">
    <property type="entry name" value="Ribosomal_uS4_N"/>
</dbReference>
<dbReference type="InterPro" id="IPR002942">
    <property type="entry name" value="S4_RNA-bd"/>
</dbReference>
<dbReference type="InterPro" id="IPR036986">
    <property type="entry name" value="S4_RNA-bd_sf"/>
</dbReference>
<dbReference type="NCBIfam" id="NF003139">
    <property type="entry name" value="PRK04051.1"/>
    <property type="match status" value="1"/>
</dbReference>
<dbReference type="NCBIfam" id="TIGR01018">
    <property type="entry name" value="uS4_arch"/>
    <property type="match status" value="1"/>
</dbReference>
<dbReference type="PANTHER" id="PTHR11831">
    <property type="entry name" value="30S 40S RIBOSOMAL PROTEIN"/>
    <property type="match status" value="1"/>
</dbReference>
<dbReference type="PANTHER" id="PTHR11831:SF5">
    <property type="entry name" value="40S RIBOSOMAL PROTEIN S9"/>
    <property type="match status" value="1"/>
</dbReference>
<dbReference type="Pfam" id="PF01479">
    <property type="entry name" value="S4"/>
    <property type="match status" value="1"/>
</dbReference>
<dbReference type="SMART" id="SM01390">
    <property type="entry name" value="Ribosomal_S4"/>
    <property type="match status" value="1"/>
</dbReference>
<dbReference type="SMART" id="SM00363">
    <property type="entry name" value="S4"/>
    <property type="match status" value="1"/>
</dbReference>
<dbReference type="SUPFAM" id="SSF55174">
    <property type="entry name" value="Alpha-L RNA-binding motif"/>
    <property type="match status" value="1"/>
</dbReference>
<dbReference type="PROSITE" id="PS00632">
    <property type="entry name" value="RIBOSOMAL_S4"/>
    <property type="match status" value="1"/>
</dbReference>
<dbReference type="PROSITE" id="PS50889">
    <property type="entry name" value="S4"/>
    <property type="match status" value="1"/>
</dbReference>